<comment type="function">
    <text evidence="1">The GINS complex plays an essential role in the initiation of DNA replication. Has a role in chromosome segregation (By similarity).</text>
</comment>
<comment type="subunit">
    <text evidence="1">Component of the GINS complex which is a heterotetramer of SLD5, PSF1, PSF2 and PSF3.</text>
</comment>
<comment type="subcellular location">
    <subcellularLocation>
        <location evidence="1">Nucleus</location>
    </subcellularLocation>
</comment>
<comment type="similarity">
    <text evidence="2">Belongs to the GINS2/PSF2 family.</text>
</comment>
<feature type="chain" id="PRO_0000255420" description="DNA replication complex GINS protein PSF2">
    <location>
        <begin position="1"/>
        <end position="211"/>
    </location>
</feature>
<gene>
    <name type="primary">PSF2</name>
    <name type="ordered locus">ADR121W</name>
</gene>
<name>PSF2_EREGS</name>
<reference key="1">
    <citation type="journal article" date="2004" name="Science">
        <title>The Ashbya gossypii genome as a tool for mapping the ancient Saccharomyces cerevisiae genome.</title>
        <authorList>
            <person name="Dietrich F.S."/>
            <person name="Voegeli S."/>
            <person name="Brachat S."/>
            <person name="Lerch A."/>
            <person name="Gates K."/>
            <person name="Steiner S."/>
            <person name="Mohr C."/>
            <person name="Poehlmann R."/>
            <person name="Luedi P."/>
            <person name="Choi S."/>
            <person name="Wing R.A."/>
            <person name="Flavier A."/>
            <person name="Gaffney T.D."/>
            <person name="Philippsen P."/>
        </authorList>
    </citation>
    <scope>NUCLEOTIDE SEQUENCE [LARGE SCALE GENOMIC DNA]</scope>
    <source>
        <strain>ATCC 10895 / CBS 109.51 / FGSC 9923 / NRRL Y-1056</strain>
    </source>
</reference>
<reference key="2">
    <citation type="journal article" date="2013" name="G3 (Bethesda)">
        <title>Genomes of Ashbya fungi isolated from insects reveal four mating-type loci, numerous translocations, lack of transposons, and distinct gene duplications.</title>
        <authorList>
            <person name="Dietrich F.S."/>
            <person name="Voegeli S."/>
            <person name="Kuo S."/>
            <person name="Philippsen P."/>
        </authorList>
    </citation>
    <scope>GENOME REANNOTATION</scope>
    <source>
        <strain>ATCC 10895 / CBS 109.51 / FGSC 9923 / NRRL Y-1056</strain>
    </source>
</reference>
<evidence type="ECO:0000250" key="1"/>
<evidence type="ECO:0000305" key="2"/>
<dbReference type="EMBL" id="AE016817">
    <property type="protein sequence ID" value="AAS52041.1"/>
    <property type="molecule type" value="Genomic_DNA"/>
</dbReference>
<dbReference type="RefSeq" id="NP_984217.1">
    <property type="nucleotide sequence ID" value="NM_209570.1"/>
</dbReference>
<dbReference type="SMR" id="Q75A06"/>
<dbReference type="FunCoup" id="Q75A06">
    <property type="interactions" value="720"/>
</dbReference>
<dbReference type="STRING" id="284811.Q75A06"/>
<dbReference type="EnsemblFungi" id="AAS52041">
    <property type="protein sequence ID" value="AAS52041"/>
    <property type="gene ID" value="AGOS_ADR121W"/>
</dbReference>
<dbReference type="GeneID" id="4620366"/>
<dbReference type="KEGG" id="ago:AGOS_ADR121W"/>
<dbReference type="eggNOG" id="KOG4071">
    <property type="taxonomic scope" value="Eukaryota"/>
</dbReference>
<dbReference type="HOGENOM" id="CLU_078274_1_1_1"/>
<dbReference type="InParanoid" id="Q75A06"/>
<dbReference type="OMA" id="DSLNCMY"/>
<dbReference type="OrthoDB" id="1938138at2759"/>
<dbReference type="Proteomes" id="UP000000591">
    <property type="component" value="Chromosome IV"/>
</dbReference>
<dbReference type="GO" id="GO:0000785">
    <property type="term" value="C:chromatin"/>
    <property type="evidence" value="ECO:0007669"/>
    <property type="project" value="EnsemblFungi"/>
</dbReference>
<dbReference type="GO" id="GO:0071162">
    <property type="term" value="C:CMG complex"/>
    <property type="evidence" value="ECO:0007669"/>
    <property type="project" value="EnsemblFungi"/>
</dbReference>
<dbReference type="GO" id="GO:0000811">
    <property type="term" value="C:GINS complex"/>
    <property type="evidence" value="ECO:0000318"/>
    <property type="project" value="GO_Central"/>
</dbReference>
<dbReference type="GO" id="GO:0043596">
    <property type="term" value="C:nuclear replication fork"/>
    <property type="evidence" value="ECO:0007669"/>
    <property type="project" value="EnsemblFungi"/>
</dbReference>
<dbReference type="GO" id="GO:0007059">
    <property type="term" value="P:chromosome segregation"/>
    <property type="evidence" value="ECO:0007669"/>
    <property type="project" value="UniProtKB-KW"/>
</dbReference>
<dbReference type="GO" id="GO:0000727">
    <property type="term" value="P:double-strand break repair via break-induced replication"/>
    <property type="evidence" value="ECO:0000318"/>
    <property type="project" value="GO_Central"/>
</dbReference>
<dbReference type="GO" id="GO:0033260">
    <property type="term" value="P:nuclear DNA replication"/>
    <property type="evidence" value="ECO:0007669"/>
    <property type="project" value="EnsemblFungi"/>
</dbReference>
<dbReference type="CDD" id="cd11712">
    <property type="entry name" value="GINS_A_psf2"/>
    <property type="match status" value="1"/>
</dbReference>
<dbReference type="CDD" id="cd21694">
    <property type="entry name" value="GINS_B_Psf2"/>
    <property type="match status" value="1"/>
</dbReference>
<dbReference type="FunFam" id="1.20.58.1020:FF:000001">
    <property type="entry name" value="DNA replication complex GINS protein PSF2"/>
    <property type="match status" value="1"/>
</dbReference>
<dbReference type="Gene3D" id="1.20.58.1020">
    <property type="match status" value="1"/>
</dbReference>
<dbReference type="Gene3D" id="3.40.5.50">
    <property type="match status" value="1"/>
</dbReference>
<dbReference type="InterPro" id="IPR021151">
    <property type="entry name" value="GINS_A"/>
</dbReference>
<dbReference type="InterPro" id="IPR036224">
    <property type="entry name" value="GINS_bundle-like_dom_sf"/>
</dbReference>
<dbReference type="InterPro" id="IPR007257">
    <property type="entry name" value="GINS_Psf2"/>
</dbReference>
<dbReference type="InterPro" id="IPR056784">
    <property type="entry name" value="PSF2_N"/>
</dbReference>
<dbReference type="PANTHER" id="PTHR12772">
    <property type="entry name" value="DNA REPLICATION COMPLEX GINS PROTEIN PSF2"/>
    <property type="match status" value="1"/>
</dbReference>
<dbReference type="PANTHER" id="PTHR12772:SF0">
    <property type="entry name" value="DNA REPLICATION COMPLEX GINS PROTEIN PSF2"/>
    <property type="match status" value="1"/>
</dbReference>
<dbReference type="Pfam" id="PF25005">
    <property type="entry name" value="PSF2_N"/>
    <property type="match status" value="1"/>
</dbReference>
<dbReference type="Pfam" id="PF05916">
    <property type="entry name" value="Sld5"/>
    <property type="match status" value="1"/>
</dbReference>
<dbReference type="PIRSF" id="PIRSF028998">
    <property type="entry name" value="GINS_Psf2_subgr"/>
    <property type="match status" value="1"/>
</dbReference>
<dbReference type="SUPFAM" id="SSF158573">
    <property type="entry name" value="GINS helical bundle-like"/>
    <property type="match status" value="1"/>
</dbReference>
<dbReference type="SUPFAM" id="SSF160059">
    <property type="entry name" value="PriA/YqbF domain"/>
    <property type="match status" value="1"/>
</dbReference>
<sequence length="211" mass="24032">MALPRNLQDTFSLQEVQFLVENEPIKIMPRITTKPIRRKAASTPSAGSSVRWKLITTDDHNVNNMVAMSSTEVSLWLALLLKQQGKCSIVAPAWLTIKQLDSFIEFELQNTSRFANLPWNWLIIAHLLFQKAADDFRDPVHILRAKIQDLREARLGKIAKGLQHLNESHLQLDNLSLSEINEMRPFAVGVMDKLRDIHAAAADREQYANNI</sequence>
<keyword id="KW-0159">Chromosome partition</keyword>
<keyword id="KW-0235">DNA replication</keyword>
<keyword id="KW-0539">Nucleus</keyword>
<keyword id="KW-1185">Reference proteome</keyword>
<protein>
    <recommendedName>
        <fullName>DNA replication complex GINS protein PSF2</fullName>
    </recommendedName>
</protein>
<proteinExistence type="inferred from homology"/>
<organism>
    <name type="scientific">Eremothecium gossypii (strain ATCC 10895 / CBS 109.51 / FGSC 9923 / NRRL Y-1056)</name>
    <name type="common">Yeast</name>
    <name type="synonym">Ashbya gossypii</name>
    <dbReference type="NCBI Taxonomy" id="284811"/>
    <lineage>
        <taxon>Eukaryota</taxon>
        <taxon>Fungi</taxon>
        <taxon>Dikarya</taxon>
        <taxon>Ascomycota</taxon>
        <taxon>Saccharomycotina</taxon>
        <taxon>Saccharomycetes</taxon>
        <taxon>Saccharomycetales</taxon>
        <taxon>Saccharomycetaceae</taxon>
        <taxon>Eremothecium</taxon>
    </lineage>
</organism>
<accession>Q75A06</accession>